<evidence type="ECO:0000255" key="1">
    <source>
        <dbReference type="HAMAP-Rule" id="MF_01365"/>
    </source>
</evidence>
<evidence type="ECO:0000305" key="2"/>
<reference key="1">
    <citation type="submission" date="2004-06" db="EMBL/GenBank/DDBJ databases">
        <authorList>
            <person name="Birren B.W."/>
            <person name="Stange-Thomann N."/>
            <person name="Hafez N."/>
            <person name="DeCaprio D."/>
            <person name="Fisher S."/>
            <person name="Butler J."/>
            <person name="Elkins T."/>
            <person name="Kodira C.D."/>
            <person name="Major J."/>
            <person name="Wang S."/>
            <person name="Nicol R."/>
            <person name="Nusbaum C."/>
        </authorList>
    </citation>
    <scope>NUCLEOTIDE SEQUENCE [LARGE SCALE GENOMIC DNA]</scope>
    <source>
        <strain>ATCC 33453 / NBRC 100688 / NCTC 11704 / L1</strain>
    </source>
</reference>
<sequence>MSRIGNRILTIPAGVEVSVASDNTVTVKGSKGTLTQKFAEVITIKVEGAELSTTRANEIKHTKQLHGTTNSLLQGMLIGVSEGFKKTLDINGVGYRAALAGSKLNLSLGYSHPVEYTIPQGITVECPKPTQIIISGIDKQVVGQVAAEIRSYRRPEPYKGKGIKYSDEIIIRKEGKAAGK</sequence>
<organism>
    <name type="scientific">Mesoplasma florum (strain ATCC 33453 / NBRC 100688 / NCTC 11704 / L1)</name>
    <name type="common">Acholeplasma florum</name>
    <dbReference type="NCBI Taxonomy" id="265311"/>
    <lineage>
        <taxon>Bacteria</taxon>
        <taxon>Bacillati</taxon>
        <taxon>Mycoplasmatota</taxon>
        <taxon>Mollicutes</taxon>
        <taxon>Entomoplasmatales</taxon>
        <taxon>Entomoplasmataceae</taxon>
        <taxon>Mesoplasma</taxon>
    </lineage>
</organism>
<keyword id="KW-1185">Reference proteome</keyword>
<keyword id="KW-0687">Ribonucleoprotein</keyword>
<keyword id="KW-0689">Ribosomal protein</keyword>
<keyword id="KW-0694">RNA-binding</keyword>
<keyword id="KW-0699">rRNA-binding</keyword>
<dbReference type="EMBL" id="AE017263">
    <property type="protein sequence ID" value="AAT75494.1"/>
    <property type="molecule type" value="Genomic_DNA"/>
</dbReference>
<dbReference type="RefSeq" id="WP_011183035.1">
    <property type="nucleotide sequence ID" value="NC_006055.1"/>
</dbReference>
<dbReference type="RefSeq" id="YP_053378.1">
    <property type="nucleotide sequence ID" value="NC_006055.1"/>
</dbReference>
<dbReference type="SMR" id="Q6F1X9"/>
<dbReference type="STRING" id="265311.Mfl138"/>
<dbReference type="PaxDb" id="265311-Mfl138"/>
<dbReference type="EnsemblBacteria" id="AAT75494">
    <property type="protein sequence ID" value="AAT75494"/>
    <property type="gene ID" value="Mfl138"/>
</dbReference>
<dbReference type="GeneID" id="2898111"/>
<dbReference type="KEGG" id="mfl:Mfl138"/>
<dbReference type="PATRIC" id="fig|265311.5.peg.139"/>
<dbReference type="eggNOG" id="COG0097">
    <property type="taxonomic scope" value="Bacteria"/>
</dbReference>
<dbReference type="HOGENOM" id="CLU_065464_1_2_14"/>
<dbReference type="OrthoDB" id="9805007at2"/>
<dbReference type="Proteomes" id="UP000006647">
    <property type="component" value="Chromosome"/>
</dbReference>
<dbReference type="GO" id="GO:0022625">
    <property type="term" value="C:cytosolic large ribosomal subunit"/>
    <property type="evidence" value="ECO:0007669"/>
    <property type="project" value="TreeGrafter"/>
</dbReference>
<dbReference type="GO" id="GO:0019843">
    <property type="term" value="F:rRNA binding"/>
    <property type="evidence" value="ECO:0007669"/>
    <property type="project" value="UniProtKB-UniRule"/>
</dbReference>
<dbReference type="GO" id="GO:0003735">
    <property type="term" value="F:structural constituent of ribosome"/>
    <property type="evidence" value="ECO:0007669"/>
    <property type="project" value="InterPro"/>
</dbReference>
<dbReference type="GO" id="GO:0002181">
    <property type="term" value="P:cytoplasmic translation"/>
    <property type="evidence" value="ECO:0007669"/>
    <property type="project" value="TreeGrafter"/>
</dbReference>
<dbReference type="FunFam" id="3.90.930.12:FF:000001">
    <property type="entry name" value="50S ribosomal protein L6"/>
    <property type="match status" value="1"/>
</dbReference>
<dbReference type="Gene3D" id="3.90.930.12">
    <property type="entry name" value="Ribosomal protein L6, alpha-beta domain"/>
    <property type="match status" value="2"/>
</dbReference>
<dbReference type="HAMAP" id="MF_01365_B">
    <property type="entry name" value="Ribosomal_uL6_B"/>
    <property type="match status" value="1"/>
</dbReference>
<dbReference type="InterPro" id="IPR000702">
    <property type="entry name" value="Ribosomal_uL6-like"/>
</dbReference>
<dbReference type="InterPro" id="IPR036789">
    <property type="entry name" value="Ribosomal_uL6-like_a/b-dom_sf"/>
</dbReference>
<dbReference type="InterPro" id="IPR020040">
    <property type="entry name" value="Ribosomal_uL6_a/b-dom"/>
</dbReference>
<dbReference type="InterPro" id="IPR019906">
    <property type="entry name" value="Ribosomal_uL6_bac-type"/>
</dbReference>
<dbReference type="InterPro" id="IPR002358">
    <property type="entry name" value="Ribosomal_uL6_CS"/>
</dbReference>
<dbReference type="NCBIfam" id="TIGR03654">
    <property type="entry name" value="L6_bact"/>
    <property type="match status" value="1"/>
</dbReference>
<dbReference type="PANTHER" id="PTHR11655">
    <property type="entry name" value="60S/50S RIBOSOMAL PROTEIN L6/L9"/>
    <property type="match status" value="1"/>
</dbReference>
<dbReference type="PANTHER" id="PTHR11655:SF14">
    <property type="entry name" value="LARGE RIBOSOMAL SUBUNIT PROTEIN UL6M"/>
    <property type="match status" value="1"/>
</dbReference>
<dbReference type="Pfam" id="PF00347">
    <property type="entry name" value="Ribosomal_L6"/>
    <property type="match status" value="2"/>
</dbReference>
<dbReference type="PIRSF" id="PIRSF002162">
    <property type="entry name" value="Ribosomal_L6"/>
    <property type="match status" value="1"/>
</dbReference>
<dbReference type="PRINTS" id="PR00059">
    <property type="entry name" value="RIBOSOMALL6"/>
</dbReference>
<dbReference type="SUPFAM" id="SSF56053">
    <property type="entry name" value="Ribosomal protein L6"/>
    <property type="match status" value="2"/>
</dbReference>
<dbReference type="PROSITE" id="PS00525">
    <property type="entry name" value="RIBOSOMAL_L6_1"/>
    <property type="match status" value="1"/>
</dbReference>
<name>RL6_MESFL</name>
<feature type="chain" id="PRO_0000260892" description="Large ribosomal subunit protein uL6">
    <location>
        <begin position="1"/>
        <end position="180"/>
    </location>
</feature>
<proteinExistence type="inferred from homology"/>
<accession>Q6F1X9</accession>
<protein>
    <recommendedName>
        <fullName evidence="1">Large ribosomal subunit protein uL6</fullName>
    </recommendedName>
    <alternativeName>
        <fullName evidence="2">50S ribosomal protein L6</fullName>
    </alternativeName>
</protein>
<gene>
    <name evidence="1" type="primary">rplF</name>
    <name type="ordered locus">Mfl138</name>
</gene>
<comment type="function">
    <text evidence="1">This protein binds to the 23S rRNA, and is important in its secondary structure. It is located near the subunit interface in the base of the L7/L12 stalk, and near the tRNA binding site of the peptidyltransferase center.</text>
</comment>
<comment type="subunit">
    <text evidence="1">Part of the 50S ribosomal subunit.</text>
</comment>
<comment type="similarity">
    <text evidence="1">Belongs to the universal ribosomal protein uL6 family.</text>
</comment>